<accession>Q5N3N6</accession>
<sequence length="128" mass="13151">MSAKTDEILESLKTLTLLEAAELVKQIEEAFGVSAAAPVGGVVVAAAAGAAAEAVEEKTEFDVVLEEVPADKKIAVLKVVRGITGLGLKEAKDLVEAAPKPIKEGVSKDDAEAAKKELEEAGAKVSVK</sequence>
<proteinExistence type="inferred from homology"/>
<protein>
    <recommendedName>
        <fullName evidence="1">Large ribosomal subunit protein bL12</fullName>
    </recommendedName>
    <alternativeName>
        <fullName evidence="2">50S ribosomal protein L7/L12</fullName>
    </alternativeName>
</protein>
<keyword id="KW-0687">Ribonucleoprotein</keyword>
<keyword id="KW-0689">Ribosomal protein</keyword>
<comment type="function">
    <text evidence="1">Forms part of the ribosomal stalk which helps the ribosome interact with GTP-bound translation factors. Is thus essential for accurate translation.</text>
</comment>
<comment type="subunit">
    <text evidence="1">Homodimer. Part of the ribosomal stalk of the 50S ribosomal subunit. Forms a multimeric L10(L12)X complex, where L10 forms an elongated spine to which 2 to 4 L12 dimers bind in a sequential fashion. Binds GTP-bound translation factors.</text>
</comment>
<comment type="similarity">
    <text evidence="1">Belongs to the bacterial ribosomal protein bL12 family.</text>
</comment>
<name>RL7_SYNP6</name>
<reference key="1">
    <citation type="journal article" date="2007" name="Photosyn. Res.">
        <title>Complete nucleotide sequence of the freshwater unicellular cyanobacterium Synechococcus elongatus PCC 6301 chromosome: gene content and organization.</title>
        <authorList>
            <person name="Sugita C."/>
            <person name="Ogata K."/>
            <person name="Shikata M."/>
            <person name="Jikuya H."/>
            <person name="Takano J."/>
            <person name="Furumichi M."/>
            <person name="Kanehisa M."/>
            <person name="Omata T."/>
            <person name="Sugiura M."/>
            <person name="Sugita M."/>
        </authorList>
    </citation>
    <scope>NUCLEOTIDE SEQUENCE [LARGE SCALE GENOMIC DNA]</scope>
    <source>
        <strain>ATCC 27144 / PCC 6301 / SAUG 1402/1</strain>
    </source>
</reference>
<evidence type="ECO:0000255" key="1">
    <source>
        <dbReference type="HAMAP-Rule" id="MF_00368"/>
    </source>
</evidence>
<evidence type="ECO:0000305" key="2"/>
<feature type="chain" id="PRO_0000243513" description="Large ribosomal subunit protein bL12">
    <location>
        <begin position="1"/>
        <end position="128"/>
    </location>
</feature>
<organism>
    <name type="scientific">Synechococcus sp. (strain ATCC 27144 / PCC 6301 / SAUG 1402/1)</name>
    <name type="common">Anacystis nidulans</name>
    <dbReference type="NCBI Taxonomy" id="269084"/>
    <lineage>
        <taxon>Bacteria</taxon>
        <taxon>Bacillati</taxon>
        <taxon>Cyanobacteriota</taxon>
        <taxon>Cyanophyceae</taxon>
        <taxon>Synechococcales</taxon>
        <taxon>Synechococcaceae</taxon>
        <taxon>Synechococcus</taxon>
    </lineage>
</organism>
<gene>
    <name evidence="1" type="primary">rplL</name>
    <name evidence="1" type="synonym">rpl12</name>
    <name type="ordered locus">syc0894_d</name>
</gene>
<dbReference type="EMBL" id="AP008231">
    <property type="protein sequence ID" value="BAD79084.1"/>
    <property type="molecule type" value="Genomic_DNA"/>
</dbReference>
<dbReference type="RefSeq" id="WP_011243206.1">
    <property type="nucleotide sequence ID" value="NZ_CP085785.1"/>
</dbReference>
<dbReference type="SMR" id="Q5N3N6"/>
<dbReference type="GeneID" id="72429464"/>
<dbReference type="KEGG" id="syc:syc0894_d"/>
<dbReference type="eggNOG" id="COG0222">
    <property type="taxonomic scope" value="Bacteria"/>
</dbReference>
<dbReference type="Proteomes" id="UP000001175">
    <property type="component" value="Chromosome"/>
</dbReference>
<dbReference type="GO" id="GO:0022625">
    <property type="term" value="C:cytosolic large ribosomal subunit"/>
    <property type="evidence" value="ECO:0007669"/>
    <property type="project" value="TreeGrafter"/>
</dbReference>
<dbReference type="GO" id="GO:0003729">
    <property type="term" value="F:mRNA binding"/>
    <property type="evidence" value="ECO:0007669"/>
    <property type="project" value="TreeGrafter"/>
</dbReference>
<dbReference type="GO" id="GO:0003735">
    <property type="term" value="F:structural constituent of ribosome"/>
    <property type="evidence" value="ECO:0007669"/>
    <property type="project" value="InterPro"/>
</dbReference>
<dbReference type="GO" id="GO:0006412">
    <property type="term" value="P:translation"/>
    <property type="evidence" value="ECO:0007669"/>
    <property type="project" value="UniProtKB-UniRule"/>
</dbReference>
<dbReference type="CDD" id="cd00387">
    <property type="entry name" value="Ribosomal_L7_L12"/>
    <property type="match status" value="1"/>
</dbReference>
<dbReference type="FunFam" id="3.30.1390.10:FF:000001">
    <property type="entry name" value="50S ribosomal protein L7/L12"/>
    <property type="match status" value="1"/>
</dbReference>
<dbReference type="Gene3D" id="3.30.1390.10">
    <property type="match status" value="1"/>
</dbReference>
<dbReference type="Gene3D" id="1.20.5.710">
    <property type="entry name" value="Single helix bin"/>
    <property type="match status" value="1"/>
</dbReference>
<dbReference type="HAMAP" id="MF_00368">
    <property type="entry name" value="Ribosomal_bL12"/>
    <property type="match status" value="1"/>
</dbReference>
<dbReference type="InterPro" id="IPR000206">
    <property type="entry name" value="Ribosomal_bL12"/>
</dbReference>
<dbReference type="InterPro" id="IPR013823">
    <property type="entry name" value="Ribosomal_bL12_C"/>
</dbReference>
<dbReference type="InterPro" id="IPR014719">
    <property type="entry name" value="Ribosomal_bL12_C/ClpS-like"/>
</dbReference>
<dbReference type="InterPro" id="IPR008932">
    <property type="entry name" value="Ribosomal_bL12_oligo"/>
</dbReference>
<dbReference type="InterPro" id="IPR036235">
    <property type="entry name" value="Ribosomal_bL12_oligo_N_sf"/>
</dbReference>
<dbReference type="NCBIfam" id="TIGR00855">
    <property type="entry name" value="L12"/>
    <property type="match status" value="1"/>
</dbReference>
<dbReference type="PANTHER" id="PTHR45987">
    <property type="entry name" value="39S RIBOSOMAL PROTEIN L12"/>
    <property type="match status" value="1"/>
</dbReference>
<dbReference type="PANTHER" id="PTHR45987:SF4">
    <property type="entry name" value="LARGE RIBOSOMAL SUBUNIT PROTEIN BL12M"/>
    <property type="match status" value="1"/>
</dbReference>
<dbReference type="Pfam" id="PF00542">
    <property type="entry name" value="Ribosomal_L12"/>
    <property type="match status" value="1"/>
</dbReference>
<dbReference type="Pfam" id="PF16320">
    <property type="entry name" value="Ribosomal_L12_N"/>
    <property type="match status" value="1"/>
</dbReference>
<dbReference type="SUPFAM" id="SSF54736">
    <property type="entry name" value="ClpS-like"/>
    <property type="match status" value="1"/>
</dbReference>
<dbReference type="SUPFAM" id="SSF48300">
    <property type="entry name" value="Ribosomal protein L7/12, oligomerisation (N-terminal) domain"/>
    <property type="match status" value="1"/>
</dbReference>